<keyword id="KW-0963">Cytoplasm</keyword>
<keyword id="KW-0489">Methyltransferase</keyword>
<keyword id="KW-0949">S-adenosyl-L-methionine</keyword>
<keyword id="KW-0808">Transferase</keyword>
<keyword id="KW-0819">tRNA processing</keyword>
<proteinExistence type="inferred from homology"/>
<sequence length="245" mass="28114">MKIDYLTLFPEMFDGVLNHSIMKRAQENNKLQINTVNFRDYAINKHNQVDDYPYGGGQGMVLKPEPVFNAMEDLDVTEQTRVILMCPQGEPFSHQKAVELSKADHIVFICGHYEGYDERIRTHLVTDEISMGDYVLTGGELPAMTMTDAIVRLIPGVLGNEQSHQDDSFSDGLLEFPQYTRPREFKGLTVPDVLLSGNHANIDAWRHEQKLIRTYNKRPDLIEKYPLTNEDKQILERYKIGLKKG</sequence>
<protein>
    <recommendedName>
        <fullName>tRNA (guanine-N(1)-)-methyltransferase</fullName>
        <ecNumber>2.1.1.228</ecNumber>
    </recommendedName>
    <alternativeName>
        <fullName>M1G-methyltransferase</fullName>
    </alternativeName>
    <alternativeName>
        <fullName>tRNA [GM37] methyltransferase</fullName>
    </alternativeName>
</protein>
<accession>P66971</accession>
<accession>Q99UN0</accession>
<comment type="function">
    <text evidence="1">Specifically methylates guanosine-37 in various tRNAs.</text>
</comment>
<comment type="catalytic activity">
    <reaction>
        <text>guanosine(37) in tRNA + S-adenosyl-L-methionine = N(1)-methylguanosine(37) in tRNA + S-adenosyl-L-homocysteine + H(+)</text>
        <dbReference type="Rhea" id="RHEA:36899"/>
        <dbReference type="Rhea" id="RHEA-COMP:10145"/>
        <dbReference type="Rhea" id="RHEA-COMP:10147"/>
        <dbReference type="ChEBI" id="CHEBI:15378"/>
        <dbReference type="ChEBI" id="CHEBI:57856"/>
        <dbReference type="ChEBI" id="CHEBI:59789"/>
        <dbReference type="ChEBI" id="CHEBI:73542"/>
        <dbReference type="ChEBI" id="CHEBI:74269"/>
        <dbReference type="EC" id="2.1.1.228"/>
    </reaction>
</comment>
<comment type="subunit">
    <text evidence="1">Homodimer.</text>
</comment>
<comment type="subcellular location">
    <subcellularLocation>
        <location evidence="2">Cytoplasm</location>
    </subcellularLocation>
</comment>
<comment type="similarity">
    <text evidence="2">Belongs to the RNA methyltransferase TrmD family.</text>
</comment>
<gene>
    <name type="primary">trmD</name>
    <name type="ordered locus">SA1083</name>
</gene>
<reference key="1">
    <citation type="journal article" date="2001" name="Lancet">
        <title>Whole genome sequencing of meticillin-resistant Staphylococcus aureus.</title>
        <authorList>
            <person name="Kuroda M."/>
            <person name="Ohta T."/>
            <person name="Uchiyama I."/>
            <person name="Baba T."/>
            <person name="Yuzawa H."/>
            <person name="Kobayashi I."/>
            <person name="Cui L."/>
            <person name="Oguchi A."/>
            <person name="Aoki K."/>
            <person name="Nagai Y."/>
            <person name="Lian J.-Q."/>
            <person name="Ito T."/>
            <person name="Kanamori M."/>
            <person name="Matsumaru H."/>
            <person name="Maruyama A."/>
            <person name="Murakami H."/>
            <person name="Hosoyama A."/>
            <person name="Mizutani-Ui Y."/>
            <person name="Takahashi N.K."/>
            <person name="Sawano T."/>
            <person name="Inoue R."/>
            <person name="Kaito C."/>
            <person name="Sekimizu K."/>
            <person name="Hirakawa H."/>
            <person name="Kuhara S."/>
            <person name="Goto S."/>
            <person name="Yabuzaki J."/>
            <person name="Kanehisa M."/>
            <person name="Yamashita A."/>
            <person name="Oshima K."/>
            <person name="Furuya K."/>
            <person name="Yoshino C."/>
            <person name="Shiba T."/>
            <person name="Hattori M."/>
            <person name="Ogasawara N."/>
            <person name="Hayashi H."/>
            <person name="Hiramatsu K."/>
        </authorList>
    </citation>
    <scope>NUCLEOTIDE SEQUENCE [LARGE SCALE GENOMIC DNA]</scope>
    <source>
        <strain>N315</strain>
    </source>
</reference>
<organism>
    <name type="scientific">Staphylococcus aureus (strain N315)</name>
    <dbReference type="NCBI Taxonomy" id="158879"/>
    <lineage>
        <taxon>Bacteria</taxon>
        <taxon>Bacillati</taxon>
        <taxon>Bacillota</taxon>
        <taxon>Bacilli</taxon>
        <taxon>Bacillales</taxon>
        <taxon>Staphylococcaceae</taxon>
        <taxon>Staphylococcus</taxon>
    </lineage>
</organism>
<dbReference type="EC" id="2.1.1.228"/>
<dbReference type="EMBL" id="BA000018">
    <property type="protein sequence ID" value="BAB42335.1"/>
    <property type="molecule type" value="Genomic_DNA"/>
</dbReference>
<dbReference type="PIR" id="C89897">
    <property type="entry name" value="C89897"/>
</dbReference>
<dbReference type="RefSeq" id="WP_000687330.1">
    <property type="nucleotide sequence ID" value="NC_002745.2"/>
</dbReference>
<dbReference type="SMR" id="P66971"/>
<dbReference type="EnsemblBacteria" id="BAB42335">
    <property type="protein sequence ID" value="BAB42335"/>
    <property type="gene ID" value="BAB42335"/>
</dbReference>
<dbReference type="KEGG" id="sau:SA1083"/>
<dbReference type="HOGENOM" id="CLU_047363_0_1_9"/>
<dbReference type="GO" id="GO:0005829">
    <property type="term" value="C:cytosol"/>
    <property type="evidence" value="ECO:0007669"/>
    <property type="project" value="TreeGrafter"/>
</dbReference>
<dbReference type="GO" id="GO:0052906">
    <property type="term" value="F:tRNA (guanine(37)-N1)-methyltransferase activity"/>
    <property type="evidence" value="ECO:0007669"/>
    <property type="project" value="UniProtKB-UniRule"/>
</dbReference>
<dbReference type="GO" id="GO:0002939">
    <property type="term" value="P:tRNA N1-guanine methylation"/>
    <property type="evidence" value="ECO:0007669"/>
    <property type="project" value="TreeGrafter"/>
</dbReference>
<dbReference type="CDD" id="cd18080">
    <property type="entry name" value="TrmD-like"/>
    <property type="match status" value="1"/>
</dbReference>
<dbReference type="FunFam" id="1.10.1270.20:FF:000001">
    <property type="entry name" value="tRNA (guanine-N(1)-)-methyltransferase"/>
    <property type="match status" value="1"/>
</dbReference>
<dbReference type="FunFam" id="3.40.1280.10:FF:000001">
    <property type="entry name" value="tRNA (guanine-N(1)-)-methyltransferase"/>
    <property type="match status" value="1"/>
</dbReference>
<dbReference type="Gene3D" id="3.40.1280.10">
    <property type="match status" value="1"/>
</dbReference>
<dbReference type="Gene3D" id="1.10.1270.20">
    <property type="entry name" value="tRNA(m1g37)methyltransferase, domain 2"/>
    <property type="match status" value="1"/>
</dbReference>
<dbReference type="HAMAP" id="MF_00605">
    <property type="entry name" value="TrmD"/>
    <property type="match status" value="1"/>
</dbReference>
<dbReference type="InterPro" id="IPR029028">
    <property type="entry name" value="Alpha/beta_knot_MTases"/>
</dbReference>
<dbReference type="InterPro" id="IPR023148">
    <property type="entry name" value="tRNA_m1G_MeTrfase_C_sf"/>
</dbReference>
<dbReference type="InterPro" id="IPR002649">
    <property type="entry name" value="tRNA_m1G_MeTrfase_TrmD"/>
</dbReference>
<dbReference type="InterPro" id="IPR029026">
    <property type="entry name" value="tRNA_m1G_MTases_N"/>
</dbReference>
<dbReference type="InterPro" id="IPR016009">
    <property type="entry name" value="tRNA_MeTrfase_TRMD/TRM10"/>
</dbReference>
<dbReference type="NCBIfam" id="NF000648">
    <property type="entry name" value="PRK00026.1"/>
    <property type="match status" value="1"/>
</dbReference>
<dbReference type="NCBIfam" id="TIGR00088">
    <property type="entry name" value="trmD"/>
    <property type="match status" value="1"/>
</dbReference>
<dbReference type="PANTHER" id="PTHR46417">
    <property type="entry name" value="TRNA (GUANINE-N(1)-)-METHYLTRANSFERASE"/>
    <property type="match status" value="1"/>
</dbReference>
<dbReference type="PANTHER" id="PTHR46417:SF1">
    <property type="entry name" value="TRNA (GUANINE-N(1)-)-METHYLTRANSFERASE"/>
    <property type="match status" value="1"/>
</dbReference>
<dbReference type="Pfam" id="PF01746">
    <property type="entry name" value="tRNA_m1G_MT"/>
    <property type="match status" value="1"/>
</dbReference>
<dbReference type="PIRSF" id="PIRSF000386">
    <property type="entry name" value="tRNA_mtase"/>
    <property type="match status" value="1"/>
</dbReference>
<dbReference type="SUPFAM" id="SSF75217">
    <property type="entry name" value="alpha/beta knot"/>
    <property type="match status" value="1"/>
</dbReference>
<feature type="chain" id="PRO_0000060461" description="tRNA (guanine-N(1)-)-methyltransferase">
    <location>
        <begin position="1"/>
        <end position="245"/>
    </location>
</feature>
<feature type="binding site" evidence="1">
    <location>
        <position position="111"/>
    </location>
    <ligand>
        <name>S-adenosyl-L-methionine</name>
        <dbReference type="ChEBI" id="CHEBI:59789"/>
    </ligand>
</feature>
<feature type="binding site" evidence="1">
    <location>
        <begin position="131"/>
        <end position="136"/>
    </location>
    <ligand>
        <name>S-adenosyl-L-methionine</name>
        <dbReference type="ChEBI" id="CHEBI:59789"/>
    </ligand>
</feature>
<name>TRMD_STAAN</name>
<evidence type="ECO:0000250" key="1"/>
<evidence type="ECO:0000305" key="2"/>